<accession>Q98MY2</accession>
<evidence type="ECO:0000255" key="1">
    <source>
        <dbReference type="HAMAP-Rule" id="MF_00206"/>
    </source>
</evidence>
<evidence type="ECO:0000255" key="2">
    <source>
        <dbReference type="PROSITE-ProRule" id="PRU01266"/>
    </source>
</evidence>
<feature type="chain" id="PRO_0000102347" description="Lipoyl synthase">
    <location>
        <begin position="1"/>
        <end position="321"/>
    </location>
</feature>
<feature type="domain" description="Radical SAM core" evidence="2">
    <location>
        <begin position="72"/>
        <end position="288"/>
    </location>
</feature>
<feature type="binding site" evidence="1">
    <location>
        <position position="60"/>
    </location>
    <ligand>
        <name>[4Fe-4S] cluster</name>
        <dbReference type="ChEBI" id="CHEBI:49883"/>
        <label>1</label>
    </ligand>
</feature>
<feature type="binding site" evidence="1">
    <location>
        <position position="65"/>
    </location>
    <ligand>
        <name>[4Fe-4S] cluster</name>
        <dbReference type="ChEBI" id="CHEBI:49883"/>
        <label>1</label>
    </ligand>
</feature>
<feature type="binding site" evidence="1">
    <location>
        <position position="71"/>
    </location>
    <ligand>
        <name>[4Fe-4S] cluster</name>
        <dbReference type="ChEBI" id="CHEBI:49883"/>
        <label>1</label>
    </ligand>
</feature>
<feature type="binding site" evidence="1">
    <location>
        <position position="86"/>
    </location>
    <ligand>
        <name>[4Fe-4S] cluster</name>
        <dbReference type="ChEBI" id="CHEBI:49883"/>
        <label>2</label>
        <note>4Fe-4S-S-AdoMet</note>
    </ligand>
</feature>
<feature type="binding site" evidence="1">
    <location>
        <position position="90"/>
    </location>
    <ligand>
        <name>[4Fe-4S] cluster</name>
        <dbReference type="ChEBI" id="CHEBI:49883"/>
        <label>2</label>
        <note>4Fe-4S-S-AdoMet</note>
    </ligand>
</feature>
<feature type="binding site" evidence="1">
    <location>
        <position position="93"/>
    </location>
    <ligand>
        <name>[4Fe-4S] cluster</name>
        <dbReference type="ChEBI" id="CHEBI:49883"/>
        <label>2</label>
        <note>4Fe-4S-S-AdoMet</note>
    </ligand>
</feature>
<feature type="binding site" evidence="1">
    <location>
        <position position="299"/>
    </location>
    <ligand>
        <name>[4Fe-4S] cluster</name>
        <dbReference type="ChEBI" id="CHEBI:49883"/>
        <label>1</label>
    </ligand>
</feature>
<name>LIPA_RHILO</name>
<proteinExistence type="inferred from homology"/>
<organism>
    <name type="scientific">Mesorhizobium japonicum (strain LMG 29417 / CECT 9101 / MAFF 303099)</name>
    <name type="common">Mesorhizobium loti (strain MAFF 303099)</name>
    <dbReference type="NCBI Taxonomy" id="266835"/>
    <lineage>
        <taxon>Bacteria</taxon>
        <taxon>Pseudomonadati</taxon>
        <taxon>Pseudomonadota</taxon>
        <taxon>Alphaproteobacteria</taxon>
        <taxon>Hyphomicrobiales</taxon>
        <taxon>Phyllobacteriaceae</taxon>
        <taxon>Mesorhizobium</taxon>
    </lineage>
</organism>
<keyword id="KW-0004">4Fe-4S</keyword>
<keyword id="KW-0963">Cytoplasm</keyword>
<keyword id="KW-0408">Iron</keyword>
<keyword id="KW-0411">Iron-sulfur</keyword>
<keyword id="KW-0479">Metal-binding</keyword>
<keyword id="KW-0949">S-adenosyl-L-methionine</keyword>
<keyword id="KW-0808">Transferase</keyword>
<dbReference type="EC" id="2.8.1.8" evidence="1"/>
<dbReference type="EMBL" id="BA000012">
    <property type="protein sequence ID" value="BAB47981.1"/>
    <property type="molecule type" value="Genomic_DNA"/>
</dbReference>
<dbReference type="RefSeq" id="WP_010909338.1">
    <property type="nucleotide sequence ID" value="NC_002678.2"/>
</dbReference>
<dbReference type="SMR" id="Q98MY2"/>
<dbReference type="KEGG" id="mlo:mlr0392"/>
<dbReference type="PATRIC" id="fig|266835.9.peg.310"/>
<dbReference type="eggNOG" id="COG0320">
    <property type="taxonomic scope" value="Bacteria"/>
</dbReference>
<dbReference type="HOGENOM" id="CLU_033144_2_1_5"/>
<dbReference type="UniPathway" id="UPA00538">
    <property type="reaction ID" value="UER00593"/>
</dbReference>
<dbReference type="Proteomes" id="UP000000552">
    <property type="component" value="Chromosome"/>
</dbReference>
<dbReference type="GO" id="GO:0005737">
    <property type="term" value="C:cytoplasm"/>
    <property type="evidence" value="ECO:0007669"/>
    <property type="project" value="UniProtKB-SubCell"/>
</dbReference>
<dbReference type="GO" id="GO:0051539">
    <property type="term" value="F:4 iron, 4 sulfur cluster binding"/>
    <property type="evidence" value="ECO:0007669"/>
    <property type="project" value="UniProtKB-UniRule"/>
</dbReference>
<dbReference type="GO" id="GO:0016992">
    <property type="term" value="F:lipoate synthase activity"/>
    <property type="evidence" value="ECO:0007669"/>
    <property type="project" value="UniProtKB-UniRule"/>
</dbReference>
<dbReference type="GO" id="GO:0046872">
    <property type="term" value="F:metal ion binding"/>
    <property type="evidence" value="ECO:0007669"/>
    <property type="project" value="UniProtKB-KW"/>
</dbReference>
<dbReference type="CDD" id="cd01335">
    <property type="entry name" value="Radical_SAM"/>
    <property type="match status" value="1"/>
</dbReference>
<dbReference type="FunFam" id="3.20.20.70:FF:000040">
    <property type="entry name" value="Lipoyl synthase"/>
    <property type="match status" value="1"/>
</dbReference>
<dbReference type="Gene3D" id="3.20.20.70">
    <property type="entry name" value="Aldolase class I"/>
    <property type="match status" value="1"/>
</dbReference>
<dbReference type="HAMAP" id="MF_00206">
    <property type="entry name" value="Lipoyl_synth"/>
    <property type="match status" value="1"/>
</dbReference>
<dbReference type="InterPro" id="IPR013785">
    <property type="entry name" value="Aldolase_TIM"/>
</dbReference>
<dbReference type="InterPro" id="IPR006638">
    <property type="entry name" value="Elp3/MiaA/NifB-like_rSAM"/>
</dbReference>
<dbReference type="InterPro" id="IPR031691">
    <property type="entry name" value="LIAS_N"/>
</dbReference>
<dbReference type="InterPro" id="IPR003698">
    <property type="entry name" value="Lipoyl_synth"/>
</dbReference>
<dbReference type="InterPro" id="IPR007197">
    <property type="entry name" value="rSAM"/>
</dbReference>
<dbReference type="NCBIfam" id="TIGR00510">
    <property type="entry name" value="lipA"/>
    <property type="match status" value="1"/>
</dbReference>
<dbReference type="NCBIfam" id="NF004019">
    <property type="entry name" value="PRK05481.1"/>
    <property type="match status" value="1"/>
</dbReference>
<dbReference type="NCBIfam" id="NF009544">
    <property type="entry name" value="PRK12928.1"/>
    <property type="match status" value="1"/>
</dbReference>
<dbReference type="PANTHER" id="PTHR10949">
    <property type="entry name" value="LIPOYL SYNTHASE"/>
    <property type="match status" value="1"/>
</dbReference>
<dbReference type="PANTHER" id="PTHR10949:SF0">
    <property type="entry name" value="LIPOYL SYNTHASE, MITOCHONDRIAL"/>
    <property type="match status" value="1"/>
</dbReference>
<dbReference type="Pfam" id="PF16881">
    <property type="entry name" value="LIAS_N"/>
    <property type="match status" value="1"/>
</dbReference>
<dbReference type="Pfam" id="PF04055">
    <property type="entry name" value="Radical_SAM"/>
    <property type="match status" value="1"/>
</dbReference>
<dbReference type="PIRSF" id="PIRSF005963">
    <property type="entry name" value="Lipoyl_synth"/>
    <property type="match status" value="1"/>
</dbReference>
<dbReference type="SFLD" id="SFLDF00271">
    <property type="entry name" value="lipoyl_synthase"/>
    <property type="match status" value="1"/>
</dbReference>
<dbReference type="SFLD" id="SFLDS00029">
    <property type="entry name" value="Radical_SAM"/>
    <property type="match status" value="1"/>
</dbReference>
<dbReference type="SMART" id="SM00729">
    <property type="entry name" value="Elp3"/>
    <property type="match status" value="1"/>
</dbReference>
<dbReference type="SUPFAM" id="SSF102114">
    <property type="entry name" value="Radical SAM enzymes"/>
    <property type="match status" value="1"/>
</dbReference>
<dbReference type="PROSITE" id="PS51918">
    <property type="entry name" value="RADICAL_SAM"/>
    <property type="match status" value="1"/>
</dbReference>
<protein>
    <recommendedName>
        <fullName evidence="1">Lipoyl synthase</fullName>
        <ecNumber evidence="1">2.8.1.8</ecNumber>
    </recommendedName>
    <alternativeName>
        <fullName evidence="1">Lip-syn</fullName>
        <shortName evidence="1">LS</shortName>
    </alternativeName>
    <alternativeName>
        <fullName evidence="1">Lipoate synthase</fullName>
    </alternativeName>
    <alternativeName>
        <fullName evidence="1">Lipoic acid synthase</fullName>
    </alternativeName>
    <alternativeName>
        <fullName evidence="1">Sulfur insertion protein LipA</fullName>
    </alternativeName>
</protein>
<sequence>MVTVLDAIANAPRLRHPEKAHKPDQEVLRKPDWIRVKAPVSKGYAETREIVKSHKLVTVCEEAGCPNIGECWEKKHATFMIMGEICTRACAFCNVATGIPTALDPDEPARVAHAVKQMGLSHVVITSVDRDDLADGGAQHFADVIRAIRAATPSTTIEILTPDFLRKDGALEIVVAARPDVFNHNLETVPSNYLKVRPGARYFHSIRLLQRVKELDPSIFTKSGIMVGLGEERNEILQLMDDLRSANVDFMTIGQYLQPSKKHHPVIRFVTPEEFKSFETIGRTKGFLLVASSPLTRSSHHAGDDFARLRAAREAQLQKSV</sequence>
<reference key="1">
    <citation type="journal article" date="2000" name="DNA Res.">
        <title>Complete genome structure of the nitrogen-fixing symbiotic bacterium Mesorhizobium loti.</title>
        <authorList>
            <person name="Kaneko T."/>
            <person name="Nakamura Y."/>
            <person name="Sato S."/>
            <person name="Asamizu E."/>
            <person name="Kato T."/>
            <person name="Sasamoto S."/>
            <person name="Watanabe A."/>
            <person name="Idesawa K."/>
            <person name="Ishikawa A."/>
            <person name="Kawashima K."/>
            <person name="Kimura T."/>
            <person name="Kishida Y."/>
            <person name="Kiyokawa C."/>
            <person name="Kohara M."/>
            <person name="Matsumoto M."/>
            <person name="Matsuno A."/>
            <person name="Mochizuki Y."/>
            <person name="Nakayama S."/>
            <person name="Nakazaki N."/>
            <person name="Shimpo S."/>
            <person name="Sugimoto M."/>
            <person name="Takeuchi C."/>
            <person name="Yamada M."/>
            <person name="Tabata S."/>
        </authorList>
    </citation>
    <scope>NUCLEOTIDE SEQUENCE [LARGE SCALE GENOMIC DNA]</scope>
    <source>
        <strain>LMG 29417 / CECT 9101 / MAFF 303099</strain>
    </source>
</reference>
<gene>
    <name evidence="1" type="primary">lipA</name>
    <name type="ordered locus">mlr0392</name>
</gene>
<comment type="function">
    <text evidence="1">Catalyzes the radical-mediated insertion of two sulfur atoms into the C-6 and C-8 positions of the octanoyl moiety bound to the lipoyl domains of lipoate-dependent enzymes, thereby converting the octanoylated domains into lipoylated derivatives.</text>
</comment>
<comment type="catalytic activity">
    <reaction evidence="1">
        <text>[[Fe-S] cluster scaffold protein carrying a second [4Fe-4S](2+) cluster] + N(6)-octanoyl-L-lysyl-[protein] + 2 oxidized [2Fe-2S]-[ferredoxin] + 2 S-adenosyl-L-methionine + 4 H(+) = [[Fe-S] cluster scaffold protein] + N(6)-[(R)-dihydrolipoyl]-L-lysyl-[protein] + 4 Fe(3+) + 2 hydrogen sulfide + 2 5'-deoxyadenosine + 2 L-methionine + 2 reduced [2Fe-2S]-[ferredoxin]</text>
        <dbReference type="Rhea" id="RHEA:16585"/>
        <dbReference type="Rhea" id="RHEA-COMP:9928"/>
        <dbReference type="Rhea" id="RHEA-COMP:10000"/>
        <dbReference type="Rhea" id="RHEA-COMP:10001"/>
        <dbReference type="Rhea" id="RHEA-COMP:10475"/>
        <dbReference type="Rhea" id="RHEA-COMP:14568"/>
        <dbReference type="Rhea" id="RHEA-COMP:14569"/>
        <dbReference type="ChEBI" id="CHEBI:15378"/>
        <dbReference type="ChEBI" id="CHEBI:17319"/>
        <dbReference type="ChEBI" id="CHEBI:29034"/>
        <dbReference type="ChEBI" id="CHEBI:29919"/>
        <dbReference type="ChEBI" id="CHEBI:33722"/>
        <dbReference type="ChEBI" id="CHEBI:33737"/>
        <dbReference type="ChEBI" id="CHEBI:33738"/>
        <dbReference type="ChEBI" id="CHEBI:57844"/>
        <dbReference type="ChEBI" id="CHEBI:59789"/>
        <dbReference type="ChEBI" id="CHEBI:78809"/>
        <dbReference type="ChEBI" id="CHEBI:83100"/>
        <dbReference type="EC" id="2.8.1.8"/>
    </reaction>
</comment>
<comment type="cofactor">
    <cofactor evidence="1">
        <name>[4Fe-4S] cluster</name>
        <dbReference type="ChEBI" id="CHEBI:49883"/>
    </cofactor>
    <text evidence="1">Binds 2 [4Fe-4S] clusters per subunit. One cluster is coordinated with 3 cysteines and an exchangeable S-adenosyl-L-methionine.</text>
</comment>
<comment type="pathway">
    <text evidence="1">Protein modification; protein lipoylation via endogenous pathway; protein N(6)-(lipoyl)lysine from octanoyl-[acyl-carrier-protein]: step 2/2.</text>
</comment>
<comment type="subcellular location">
    <subcellularLocation>
        <location evidence="1">Cytoplasm</location>
    </subcellularLocation>
</comment>
<comment type="similarity">
    <text evidence="1">Belongs to the radical SAM superfamily. Lipoyl synthase family.</text>
</comment>